<accession>P15970</accession>
<feature type="chain" id="PRO_0000087604" description="Omega-agatoxin-Aa1b">
    <location>
        <begin position="1"/>
        <end position="36" status="greater than"/>
    </location>
</feature>
<feature type="non-terminal residue">
    <location>
        <position position="36"/>
    </location>
</feature>
<organism>
    <name type="scientific">Agelenopsis aperta</name>
    <name type="common">North American funnel-web spider</name>
    <name type="synonym">Agelenopsis gertschi</name>
    <dbReference type="NCBI Taxonomy" id="6908"/>
    <lineage>
        <taxon>Eukaryota</taxon>
        <taxon>Metazoa</taxon>
        <taxon>Ecdysozoa</taxon>
        <taxon>Arthropoda</taxon>
        <taxon>Chelicerata</taxon>
        <taxon>Arachnida</taxon>
        <taxon>Araneae</taxon>
        <taxon>Araneomorphae</taxon>
        <taxon>Entelegynae</taxon>
        <taxon>Agelenidae</taxon>
        <taxon>Agelenopsis</taxon>
    </lineage>
</organism>
<reference key="1">
    <citation type="journal article" date="1990" name="J. Biol. Chem.">
        <title>Omega-agatoxins: novel calcium channel antagonists of two subtypes from funnel web spider (Agelenopsis aperta) venom.</title>
        <authorList>
            <person name="Adams M.E."/>
            <person name="Bindokas V.P."/>
            <person name="Hasegawa L."/>
            <person name="Venema V.J."/>
        </authorList>
    </citation>
    <scope>PROTEIN SEQUENCE</scope>
    <source>
        <tissue>Venom</tissue>
    </source>
</reference>
<name>TOG1B_AGEAP</name>
<evidence type="ECO:0000305" key="1"/>
<dbReference type="PIR" id="B34923">
    <property type="entry name" value="B34923"/>
</dbReference>
<dbReference type="SMR" id="P15970"/>
<dbReference type="ArachnoServer" id="AS000176">
    <property type="toxin name" value="omega-agatoxin-Aa1b (N-terminal fragment)"/>
</dbReference>
<dbReference type="GO" id="GO:0005576">
    <property type="term" value="C:extracellular region"/>
    <property type="evidence" value="ECO:0007669"/>
    <property type="project" value="UniProtKB-SubCell"/>
</dbReference>
<dbReference type="GO" id="GO:0044231">
    <property type="term" value="C:host cell presynaptic membrane"/>
    <property type="evidence" value="ECO:0007669"/>
    <property type="project" value="UniProtKB-KW"/>
</dbReference>
<dbReference type="GO" id="GO:0005246">
    <property type="term" value="F:calcium channel regulator activity"/>
    <property type="evidence" value="ECO:0007669"/>
    <property type="project" value="UniProtKB-KW"/>
</dbReference>
<dbReference type="GO" id="GO:0090729">
    <property type="term" value="F:toxin activity"/>
    <property type="evidence" value="ECO:0007669"/>
    <property type="project" value="UniProtKB-KW"/>
</dbReference>
<dbReference type="InterPro" id="IPR013605">
    <property type="entry name" value="Toxin_34"/>
</dbReference>
<dbReference type="Pfam" id="PF08396">
    <property type="entry name" value="Toxin_34"/>
    <property type="match status" value="1"/>
</dbReference>
<keyword id="KW-0108">Calcium channel impairing toxin</keyword>
<keyword id="KW-0903">Direct protein sequencing</keyword>
<keyword id="KW-0872">Ion channel impairing toxin</keyword>
<keyword id="KW-0528">Neurotoxin</keyword>
<keyword id="KW-0638">Presynaptic neurotoxin</keyword>
<keyword id="KW-0964">Secreted</keyword>
<keyword id="KW-0800">Toxin</keyword>
<keyword id="KW-1218">Voltage-gated calcium channel impairing toxin</keyword>
<proteinExistence type="evidence at protein level"/>
<comment type="function">
    <text>Omega-agatoxin are antagonist of voltage-gated calcium channels. They block insect neuromuscular transmission presynaptically. This toxin is a blocker of L-type calcium channels (Cav/CACNA1).</text>
</comment>
<comment type="subcellular location">
    <subcellularLocation>
        <location>Secreted</location>
    </subcellularLocation>
</comment>
<comment type="tissue specificity">
    <text>Expressed by the venom gland.</text>
</comment>
<comment type="similarity">
    <text evidence="1">Belongs to the neurotoxin 04 (omega-agtx) family. 01 (type I omega-agtx) subfamily.</text>
</comment>
<protein>
    <recommendedName>
        <fullName>Omega-agatoxin-Aa1b</fullName>
        <shortName>Omega-AGTX-Aa1b</shortName>
    </recommendedName>
    <alternativeName>
        <fullName>Omega-agatoxin IB</fullName>
        <shortName>Omega-Aga-IB</shortName>
    </alternativeName>
    <alternativeName>
        <fullName>Omega-agatoxin-1B</fullName>
    </alternativeName>
</protein>
<sequence length="36" mass="3934">ERGLPEGAECDGNESDCKCAGAWIKCRCPPMWHING</sequence>